<keyword id="KW-0963">Cytoplasm</keyword>
<keyword id="KW-0342">GTP-binding</keyword>
<keyword id="KW-0378">Hydrolase</keyword>
<keyword id="KW-0460">Magnesium</keyword>
<keyword id="KW-0479">Metal-binding</keyword>
<keyword id="KW-0547">Nucleotide-binding</keyword>
<keyword id="KW-0630">Potassium</keyword>
<keyword id="KW-1185">Reference proteome</keyword>
<keyword id="KW-0819">tRNA processing</keyword>
<reference key="1">
    <citation type="submission" date="2002-06" db="EMBL/GenBank/DDBJ databases">
        <title>Synechococcus elongatus PCC7942 cosmid 6C3.</title>
        <authorList>
            <person name="Holtman C.K."/>
            <person name="Sandoval P."/>
            <person name="Chen Y."/>
            <person name="Socias T."/>
            <person name="Mohler B.J."/>
            <person name="Gonzalez A."/>
            <person name="Salinas I."/>
            <person name="McMurtry S."/>
            <person name="Golden S.S."/>
            <person name="Youderian P."/>
        </authorList>
    </citation>
    <scope>NUCLEOTIDE SEQUENCE [GENOMIC DNA]</scope>
</reference>
<reference key="2">
    <citation type="submission" date="2005-08" db="EMBL/GenBank/DDBJ databases">
        <title>Complete sequence of chromosome 1 of Synechococcus elongatus PCC 7942.</title>
        <authorList>
            <consortium name="US DOE Joint Genome Institute"/>
            <person name="Copeland A."/>
            <person name="Lucas S."/>
            <person name="Lapidus A."/>
            <person name="Barry K."/>
            <person name="Detter J.C."/>
            <person name="Glavina T."/>
            <person name="Hammon N."/>
            <person name="Israni S."/>
            <person name="Pitluck S."/>
            <person name="Schmutz J."/>
            <person name="Larimer F."/>
            <person name="Land M."/>
            <person name="Kyrpides N."/>
            <person name="Lykidis A."/>
            <person name="Golden S."/>
            <person name="Richardson P."/>
        </authorList>
    </citation>
    <scope>NUCLEOTIDE SEQUENCE [LARGE SCALE GENOMIC DNA]</scope>
    <source>
        <strain>ATCC 33912 / PCC 7942 / FACHB-805</strain>
    </source>
</reference>
<accession>Q8KPU2</accession>
<accession>Q31MV7</accession>
<sequence length="462" mass="49888">MVGFSGDTIAAIATAIVPQQGSVGIVRLSGAAATEIARQIFQIAGQQPWESHRILYGYIRDPESGRLVDEALLLPMLAPRSYTREDVVELHCHGGLMPVQQTLQLCIRAGARLAEPGEFTLRAFLNGRLDLSQAESIADLISAQSPQAAQAALGSLQGKLGHPIRQLRDRCLDILAEVEARIDFEDDLPPLDLEAIAAQLTAAGADMQAILSTADRGELLRTGLKIAIVGRPNVGKSSLLNAWSRCDRAIVTDLPGTTRDLVESQLIVGGIPVQVLDTAGIRETSDQVEQIGVERSRRAAQSADLVLLTIDASAGWSAEDQTIWEAVSDRPILLVINKRDRLSEAERHAIALPQQEFKAIVWTAAAQQQGIEDLEAAILAAVGTGDLTSANWDWALNQRQVAALTTAQTALRRVEETLQAQLPLDFWTIDLREAIAALGSITGEEIAESMLDLIFSRFCIGK</sequence>
<evidence type="ECO:0000255" key="1">
    <source>
        <dbReference type="HAMAP-Rule" id="MF_00379"/>
    </source>
</evidence>
<evidence type="ECO:0000305" key="2"/>
<comment type="function">
    <text evidence="1">Exhibits a very high intrinsic GTPase hydrolysis rate. Involved in the addition of a carboxymethylaminomethyl (cmnm) group at the wobble position (U34) of certain tRNAs, forming tRNA-cmnm(5)s(2)U34.</text>
</comment>
<comment type="cofactor">
    <cofactor evidence="1">
        <name>K(+)</name>
        <dbReference type="ChEBI" id="CHEBI:29103"/>
    </cofactor>
    <text evidence="1">Binds 1 potassium ion per subunit.</text>
</comment>
<comment type="subunit">
    <text evidence="1">Homodimer. Heterotetramer of two MnmE and two MnmG subunits.</text>
</comment>
<comment type="subcellular location">
    <subcellularLocation>
        <location evidence="1">Cytoplasm</location>
    </subcellularLocation>
</comment>
<comment type="similarity">
    <text evidence="1">Belongs to the TRAFAC class TrmE-Era-EngA-EngB-Septin-like GTPase superfamily. TrmE GTPase family.</text>
</comment>
<comment type="sequence caution" evidence="2">
    <conflict type="erroneous initiation">
        <sequence resource="EMBL-CDS" id="AAM82659"/>
    </conflict>
</comment>
<proteinExistence type="inferred from homology"/>
<gene>
    <name evidence="1" type="primary">mnmE</name>
    <name evidence="1" type="synonym">trmE</name>
    <name type="ordered locus">Synpcc7942_1582</name>
    <name type="ORF">sed0016</name>
</gene>
<dbReference type="EC" id="3.6.-.-" evidence="1"/>
<dbReference type="EMBL" id="AY120852">
    <property type="protein sequence ID" value="AAM82659.1"/>
    <property type="status" value="ALT_INIT"/>
    <property type="molecule type" value="Genomic_DNA"/>
</dbReference>
<dbReference type="EMBL" id="CP000100">
    <property type="protein sequence ID" value="ABB57612.1"/>
    <property type="molecule type" value="Genomic_DNA"/>
</dbReference>
<dbReference type="RefSeq" id="WP_011378095.1">
    <property type="nucleotide sequence ID" value="NZ_JACJTX010000004.1"/>
</dbReference>
<dbReference type="SMR" id="Q8KPU2"/>
<dbReference type="STRING" id="1140.Synpcc7942_1582"/>
<dbReference type="PaxDb" id="1140-Synpcc7942_1582"/>
<dbReference type="GeneID" id="72430380"/>
<dbReference type="KEGG" id="syf:Synpcc7942_1582"/>
<dbReference type="eggNOG" id="COG0486">
    <property type="taxonomic scope" value="Bacteria"/>
</dbReference>
<dbReference type="HOGENOM" id="CLU_019624_4_1_3"/>
<dbReference type="OrthoDB" id="9805918at2"/>
<dbReference type="BioCyc" id="SYNEL:SYNPCC7942_1582-MONOMER"/>
<dbReference type="Proteomes" id="UP000889800">
    <property type="component" value="Chromosome"/>
</dbReference>
<dbReference type="GO" id="GO:0005829">
    <property type="term" value="C:cytosol"/>
    <property type="evidence" value="ECO:0007669"/>
    <property type="project" value="TreeGrafter"/>
</dbReference>
<dbReference type="GO" id="GO:0005525">
    <property type="term" value="F:GTP binding"/>
    <property type="evidence" value="ECO:0007669"/>
    <property type="project" value="UniProtKB-UniRule"/>
</dbReference>
<dbReference type="GO" id="GO:0003924">
    <property type="term" value="F:GTPase activity"/>
    <property type="evidence" value="ECO:0007669"/>
    <property type="project" value="UniProtKB-UniRule"/>
</dbReference>
<dbReference type="GO" id="GO:0046872">
    <property type="term" value="F:metal ion binding"/>
    <property type="evidence" value="ECO:0007669"/>
    <property type="project" value="UniProtKB-KW"/>
</dbReference>
<dbReference type="GO" id="GO:0030488">
    <property type="term" value="P:tRNA methylation"/>
    <property type="evidence" value="ECO:0007669"/>
    <property type="project" value="TreeGrafter"/>
</dbReference>
<dbReference type="GO" id="GO:0002098">
    <property type="term" value="P:tRNA wobble uridine modification"/>
    <property type="evidence" value="ECO:0007669"/>
    <property type="project" value="TreeGrafter"/>
</dbReference>
<dbReference type="CDD" id="cd04164">
    <property type="entry name" value="trmE"/>
    <property type="match status" value="1"/>
</dbReference>
<dbReference type="CDD" id="cd14858">
    <property type="entry name" value="TrmE_N"/>
    <property type="match status" value="1"/>
</dbReference>
<dbReference type="FunFam" id="3.30.1360.120:FF:000003">
    <property type="entry name" value="tRNA modification GTPase MnmE"/>
    <property type="match status" value="1"/>
</dbReference>
<dbReference type="FunFam" id="3.40.50.300:FF:000494">
    <property type="entry name" value="tRNA modification GTPase MnmE"/>
    <property type="match status" value="1"/>
</dbReference>
<dbReference type="Gene3D" id="3.40.50.300">
    <property type="entry name" value="P-loop containing nucleotide triphosphate hydrolases"/>
    <property type="match status" value="1"/>
</dbReference>
<dbReference type="Gene3D" id="3.30.1360.120">
    <property type="entry name" value="Probable tRNA modification gtpase trme, domain 1"/>
    <property type="match status" value="1"/>
</dbReference>
<dbReference type="Gene3D" id="1.20.120.430">
    <property type="entry name" value="tRNA modification GTPase MnmE domain 2"/>
    <property type="match status" value="1"/>
</dbReference>
<dbReference type="HAMAP" id="MF_00379">
    <property type="entry name" value="GTPase_MnmE"/>
    <property type="match status" value="1"/>
</dbReference>
<dbReference type="InterPro" id="IPR031168">
    <property type="entry name" value="G_TrmE"/>
</dbReference>
<dbReference type="InterPro" id="IPR006073">
    <property type="entry name" value="GTP-bd"/>
</dbReference>
<dbReference type="InterPro" id="IPR018948">
    <property type="entry name" value="GTP-bd_TrmE_N"/>
</dbReference>
<dbReference type="InterPro" id="IPR004520">
    <property type="entry name" value="GTPase_MnmE"/>
</dbReference>
<dbReference type="InterPro" id="IPR027368">
    <property type="entry name" value="MnmE_dom2"/>
</dbReference>
<dbReference type="InterPro" id="IPR025867">
    <property type="entry name" value="MnmE_helical"/>
</dbReference>
<dbReference type="InterPro" id="IPR027417">
    <property type="entry name" value="P-loop_NTPase"/>
</dbReference>
<dbReference type="InterPro" id="IPR005225">
    <property type="entry name" value="Small_GTP-bd"/>
</dbReference>
<dbReference type="InterPro" id="IPR027266">
    <property type="entry name" value="TrmE/GcvT_dom1"/>
</dbReference>
<dbReference type="NCBIfam" id="TIGR00450">
    <property type="entry name" value="mnmE_trmE_thdF"/>
    <property type="match status" value="1"/>
</dbReference>
<dbReference type="NCBIfam" id="TIGR00231">
    <property type="entry name" value="small_GTP"/>
    <property type="match status" value="1"/>
</dbReference>
<dbReference type="PANTHER" id="PTHR42714">
    <property type="entry name" value="TRNA MODIFICATION GTPASE GTPBP3"/>
    <property type="match status" value="1"/>
</dbReference>
<dbReference type="PANTHER" id="PTHR42714:SF2">
    <property type="entry name" value="TRNA MODIFICATION GTPASE GTPBP3, MITOCHONDRIAL"/>
    <property type="match status" value="1"/>
</dbReference>
<dbReference type="Pfam" id="PF01926">
    <property type="entry name" value="MMR_HSR1"/>
    <property type="match status" value="1"/>
</dbReference>
<dbReference type="Pfam" id="PF12631">
    <property type="entry name" value="MnmE_helical"/>
    <property type="match status" value="1"/>
</dbReference>
<dbReference type="Pfam" id="PF10396">
    <property type="entry name" value="TrmE_N"/>
    <property type="match status" value="1"/>
</dbReference>
<dbReference type="PRINTS" id="PR00449">
    <property type="entry name" value="RASTRNSFRMNG"/>
</dbReference>
<dbReference type="SUPFAM" id="SSF52540">
    <property type="entry name" value="P-loop containing nucleoside triphosphate hydrolases"/>
    <property type="match status" value="1"/>
</dbReference>
<dbReference type="PROSITE" id="PS51709">
    <property type="entry name" value="G_TRME"/>
    <property type="match status" value="1"/>
</dbReference>
<feature type="chain" id="PRO_0000188936" description="tRNA modification GTPase MnmE">
    <location>
        <begin position="1"/>
        <end position="462"/>
    </location>
</feature>
<feature type="domain" description="TrmE-type G">
    <location>
        <begin position="223"/>
        <end position="383"/>
    </location>
</feature>
<feature type="binding site" evidence="1">
    <location>
        <position position="27"/>
    </location>
    <ligand>
        <name>(6S)-5-formyl-5,6,7,8-tetrahydrofolate</name>
        <dbReference type="ChEBI" id="CHEBI:57457"/>
    </ligand>
</feature>
<feature type="binding site" evidence="1">
    <location>
        <position position="89"/>
    </location>
    <ligand>
        <name>(6S)-5-formyl-5,6,7,8-tetrahydrofolate</name>
        <dbReference type="ChEBI" id="CHEBI:57457"/>
    </ligand>
</feature>
<feature type="binding site" evidence="1">
    <location>
        <position position="128"/>
    </location>
    <ligand>
        <name>(6S)-5-formyl-5,6,7,8-tetrahydrofolate</name>
        <dbReference type="ChEBI" id="CHEBI:57457"/>
    </ligand>
</feature>
<feature type="binding site" evidence="1">
    <location>
        <begin position="233"/>
        <end position="238"/>
    </location>
    <ligand>
        <name>GTP</name>
        <dbReference type="ChEBI" id="CHEBI:37565"/>
    </ligand>
</feature>
<feature type="binding site" evidence="1">
    <location>
        <position position="233"/>
    </location>
    <ligand>
        <name>K(+)</name>
        <dbReference type="ChEBI" id="CHEBI:29103"/>
    </ligand>
</feature>
<feature type="binding site" evidence="1">
    <location>
        <position position="237"/>
    </location>
    <ligand>
        <name>Mg(2+)</name>
        <dbReference type="ChEBI" id="CHEBI:18420"/>
    </ligand>
</feature>
<feature type="binding site" evidence="1">
    <location>
        <begin position="252"/>
        <end position="258"/>
    </location>
    <ligand>
        <name>GTP</name>
        <dbReference type="ChEBI" id="CHEBI:37565"/>
    </ligand>
</feature>
<feature type="binding site" evidence="1">
    <location>
        <position position="252"/>
    </location>
    <ligand>
        <name>K(+)</name>
        <dbReference type="ChEBI" id="CHEBI:29103"/>
    </ligand>
</feature>
<feature type="binding site" evidence="1">
    <location>
        <position position="254"/>
    </location>
    <ligand>
        <name>K(+)</name>
        <dbReference type="ChEBI" id="CHEBI:29103"/>
    </ligand>
</feature>
<feature type="binding site" evidence="1">
    <location>
        <position position="257"/>
    </location>
    <ligand>
        <name>K(+)</name>
        <dbReference type="ChEBI" id="CHEBI:29103"/>
    </ligand>
</feature>
<feature type="binding site" evidence="1">
    <location>
        <position position="258"/>
    </location>
    <ligand>
        <name>Mg(2+)</name>
        <dbReference type="ChEBI" id="CHEBI:18420"/>
    </ligand>
</feature>
<feature type="binding site" evidence="1">
    <location>
        <begin position="277"/>
        <end position="280"/>
    </location>
    <ligand>
        <name>GTP</name>
        <dbReference type="ChEBI" id="CHEBI:37565"/>
    </ligand>
</feature>
<feature type="binding site" evidence="1">
    <location>
        <position position="462"/>
    </location>
    <ligand>
        <name>(6S)-5-formyl-5,6,7,8-tetrahydrofolate</name>
        <dbReference type="ChEBI" id="CHEBI:57457"/>
    </ligand>
</feature>
<feature type="sequence conflict" description="In Ref. 1; AAM82659." evidence="2" ref="1">
    <original>DMQAILSTADRGELLRTGL</original>
    <variation>GHASDFINCRSRGTVAYGP</variation>
    <location>
        <begin position="206"/>
        <end position="224"/>
    </location>
</feature>
<name>MNME_SYNE7</name>
<protein>
    <recommendedName>
        <fullName evidence="1">tRNA modification GTPase MnmE</fullName>
        <ecNumber evidence="1">3.6.-.-</ecNumber>
    </recommendedName>
</protein>
<organism>
    <name type="scientific">Synechococcus elongatus (strain ATCC 33912 / PCC 7942 / FACHB-805)</name>
    <name type="common">Anacystis nidulans R2</name>
    <dbReference type="NCBI Taxonomy" id="1140"/>
    <lineage>
        <taxon>Bacteria</taxon>
        <taxon>Bacillati</taxon>
        <taxon>Cyanobacteriota</taxon>
        <taxon>Cyanophyceae</taxon>
        <taxon>Synechococcales</taxon>
        <taxon>Synechococcaceae</taxon>
        <taxon>Synechococcus</taxon>
    </lineage>
</organism>